<dbReference type="EC" id="7.1.1.2"/>
<dbReference type="EMBL" id="L06178">
    <property type="protein sequence ID" value="AAB96807.1"/>
    <property type="molecule type" value="Genomic_DNA"/>
</dbReference>
<dbReference type="PIR" id="S52969">
    <property type="entry name" value="S52969"/>
</dbReference>
<dbReference type="RefSeq" id="NP_008091.1">
    <property type="nucleotide sequence ID" value="NC_001566.1"/>
</dbReference>
<dbReference type="SMR" id="P34859"/>
<dbReference type="GeneID" id="807694"/>
<dbReference type="CTD" id="4539"/>
<dbReference type="GO" id="GO:0031966">
    <property type="term" value="C:mitochondrial membrane"/>
    <property type="evidence" value="ECO:0007669"/>
    <property type="project" value="UniProtKB-SubCell"/>
</dbReference>
<dbReference type="GO" id="GO:0008137">
    <property type="term" value="F:NADH dehydrogenase (ubiquinone) activity"/>
    <property type="evidence" value="ECO:0007669"/>
    <property type="project" value="UniProtKB-EC"/>
</dbReference>
<dbReference type="Gene3D" id="1.10.287.3510">
    <property type="match status" value="1"/>
</dbReference>
<gene>
    <name type="primary">ND4L</name>
</gene>
<protein>
    <recommendedName>
        <fullName>NADH-ubiquinone oxidoreductase chain 4L</fullName>
        <ecNumber>7.1.1.2</ecNumber>
    </recommendedName>
    <alternativeName>
        <fullName>NADH dehydrogenase subunit 4L</fullName>
    </alternativeName>
</protein>
<feature type="chain" id="PRO_0000118385" description="NADH-ubiquinone oxidoreductase chain 4L">
    <location>
        <begin position="1"/>
        <end position="87"/>
    </location>
</feature>
<feature type="transmembrane region" description="Helical" evidence="2">
    <location>
        <begin position="22"/>
        <end position="42"/>
    </location>
</feature>
<feature type="transmembrane region" description="Helical" evidence="2">
    <location>
        <begin position="49"/>
        <end position="69"/>
    </location>
</feature>
<evidence type="ECO:0000250" key="1"/>
<evidence type="ECO:0000255" key="2"/>
<evidence type="ECO:0000305" key="3"/>
<organism>
    <name type="scientific">Apis mellifera ligustica</name>
    <name type="common">Common honeybee</name>
    <name type="synonym">Italian honeybee</name>
    <dbReference type="NCBI Taxonomy" id="7469"/>
    <lineage>
        <taxon>Eukaryota</taxon>
        <taxon>Metazoa</taxon>
        <taxon>Ecdysozoa</taxon>
        <taxon>Arthropoda</taxon>
        <taxon>Hexapoda</taxon>
        <taxon>Insecta</taxon>
        <taxon>Pterygota</taxon>
        <taxon>Neoptera</taxon>
        <taxon>Endopterygota</taxon>
        <taxon>Hymenoptera</taxon>
        <taxon>Apocrita</taxon>
        <taxon>Aculeata</taxon>
        <taxon>Apoidea</taxon>
        <taxon>Anthophila</taxon>
        <taxon>Apidae</taxon>
        <taxon>Apis</taxon>
    </lineage>
</organism>
<proteinExistence type="inferred from homology"/>
<geneLocation type="mitochondrion"/>
<sequence>MKLLFVMMLLFFMFLWYYNVNFLSFLILMEFLVITVLFFIIGYEINSWLFLIFLVFSVCELVLGLSLLVSMNYELGHQKLSVMDLIY</sequence>
<accession>P34859</accession>
<name>NU4LM_APILI</name>
<reference key="1">
    <citation type="journal article" date="1993" name="Genetics">
        <title>The mitochondrial genome of the honeybee Apis mellifera: complete sequence and genome organization.</title>
        <authorList>
            <person name="Crozier R.H."/>
            <person name="Crozier Y.C."/>
        </authorList>
    </citation>
    <scope>NUCLEOTIDE SEQUENCE [GENOMIC DNA]</scope>
    <source>
        <tissue>Thorax</tissue>
    </source>
</reference>
<comment type="function">
    <text evidence="1">Core subunit of the mitochondrial membrane respiratory chain NADH dehydrogenase (Complex I) that is believed to belong to the minimal assembly required for catalysis. Complex I functions in the transfer of electrons from NADH to the respiratory chain. The immediate electron acceptor for the enzyme is believed to be ubiquinone (By similarity).</text>
</comment>
<comment type="catalytic activity">
    <reaction>
        <text>a ubiquinone + NADH + 5 H(+)(in) = a ubiquinol + NAD(+) + 4 H(+)(out)</text>
        <dbReference type="Rhea" id="RHEA:29091"/>
        <dbReference type="Rhea" id="RHEA-COMP:9565"/>
        <dbReference type="Rhea" id="RHEA-COMP:9566"/>
        <dbReference type="ChEBI" id="CHEBI:15378"/>
        <dbReference type="ChEBI" id="CHEBI:16389"/>
        <dbReference type="ChEBI" id="CHEBI:17976"/>
        <dbReference type="ChEBI" id="CHEBI:57540"/>
        <dbReference type="ChEBI" id="CHEBI:57945"/>
        <dbReference type="EC" id="7.1.1.2"/>
    </reaction>
</comment>
<comment type="subcellular location">
    <subcellularLocation>
        <location evidence="1">Mitochondrion membrane</location>
        <topology evidence="1">Multi-pass membrane protein</topology>
    </subcellularLocation>
</comment>
<comment type="similarity">
    <text evidence="3">Belongs to the complex I subunit 4L family.</text>
</comment>
<keyword id="KW-0249">Electron transport</keyword>
<keyword id="KW-0472">Membrane</keyword>
<keyword id="KW-0496">Mitochondrion</keyword>
<keyword id="KW-0520">NAD</keyword>
<keyword id="KW-0679">Respiratory chain</keyword>
<keyword id="KW-1278">Translocase</keyword>
<keyword id="KW-0812">Transmembrane</keyword>
<keyword id="KW-1133">Transmembrane helix</keyword>
<keyword id="KW-0813">Transport</keyword>
<keyword id="KW-0830">Ubiquinone</keyword>